<proteinExistence type="evidence at protein level"/>
<keyword id="KW-0133">Cell shape</keyword>
<keyword id="KW-0963">Cytoplasm</keyword>
<keyword id="KW-0206">Cytoskeleton</keyword>
<keyword id="KW-0472">Membrane</keyword>
<keyword id="KW-0488">Methylation</keyword>
<keyword id="KW-0597">Phosphoprotein</keyword>
<keyword id="KW-1185">Reference proteome</keyword>
<keyword id="KW-0677">Repeat</keyword>
<evidence type="ECO:0000250" key="1"/>
<evidence type="ECO:0000250" key="2">
    <source>
        <dbReference type="UniProtKB" id="Q00587"/>
    </source>
</evidence>
<evidence type="ECO:0000250" key="3">
    <source>
        <dbReference type="UniProtKB" id="Q91W92"/>
    </source>
</evidence>
<evidence type="ECO:0000255" key="4"/>
<evidence type="ECO:0000255" key="5">
    <source>
        <dbReference type="PROSITE-ProRule" id="PRU00057"/>
    </source>
</evidence>
<evidence type="ECO:0000256" key="6">
    <source>
        <dbReference type="SAM" id="MobiDB-lite"/>
    </source>
</evidence>
<evidence type="ECO:0000312" key="7">
    <source>
        <dbReference type="EMBL" id="AAI28745.1"/>
    </source>
</evidence>
<evidence type="ECO:0007744" key="8">
    <source>
    </source>
</evidence>
<sequence>MPGPQGGTGAPSMSLGKLSPVGWVPSSHGKRRLTADMISPPLGDFRHTMHVGRGGDVFGDTSFLSNHGGRSGNTHRSPRSFLARKLQQVRRVGVPPRRMASPAATSPAPPPISPIIKNAISLPQLNQATYDSLVVSKLSFDSTPASSTDGRSGYGLESGFCTISRLPRVEKHSSRDRDHDRDPDHSQDREQSSSPSEPNPNPELRRSDSLLSFRFDLDLGPSLLSELLGVMSLSEAPAANPPAPAANPAPTAKPPADAVTTLDTVTSLPAPTASSPSSGRFPNGVTAVLGPVAEVKASPVGEGPQVPSKMAFDRRGASWGAIRASRHYTEMDARRELAGVLPQVHGSWESLNEEWSAPPASSRAPVPSTVQANAFEFADADEDDEVKV</sequence>
<gene>
    <name evidence="7" type="primary">Cdc42ep1</name>
    <name evidence="2" type="synonym">Borg5</name>
</gene>
<feature type="chain" id="PRO_0000278120" description="Cdc42 effector protein 1">
    <location>
        <begin position="1"/>
        <end position="388"/>
    </location>
</feature>
<feature type="domain" description="CRIB" evidence="5">
    <location>
        <begin position="38"/>
        <end position="52"/>
    </location>
</feature>
<feature type="repeat" description="1" evidence="4">
    <location>
        <begin position="237"/>
        <end position="243"/>
    </location>
</feature>
<feature type="repeat" description="2" evidence="4">
    <location>
        <begin position="250"/>
        <end position="256"/>
    </location>
</feature>
<feature type="region of interest" description="Disordered" evidence="6">
    <location>
        <begin position="1"/>
        <end position="28"/>
    </location>
</feature>
<feature type="region of interest" description="Disordered" evidence="6">
    <location>
        <begin position="165"/>
        <end position="206"/>
    </location>
</feature>
<feature type="region of interest" description="2 X 7 AA tandem repeats of [PT]-[AT]-A-[ENT]-[PT]-[PTS]-[AG]" evidence="4">
    <location>
        <begin position="237"/>
        <end position="270"/>
    </location>
</feature>
<feature type="region of interest" description="Disordered" evidence="6">
    <location>
        <begin position="237"/>
        <end position="257"/>
    </location>
</feature>
<feature type="compositionally biased region" description="Basic and acidic residues" evidence="6">
    <location>
        <begin position="167"/>
        <end position="191"/>
    </location>
</feature>
<feature type="compositionally biased region" description="Pro residues" evidence="6">
    <location>
        <begin position="239"/>
        <end position="253"/>
    </location>
</feature>
<feature type="modified residue" description="Phosphoserine" evidence="2">
    <location>
        <position position="19"/>
    </location>
</feature>
<feature type="modified residue" description="Phosphoserine" evidence="2">
    <location>
        <position position="27"/>
    </location>
</feature>
<feature type="modified residue" description="Phosphothreonine" evidence="3">
    <location>
        <position position="34"/>
    </location>
</feature>
<feature type="modified residue" description="Phosphoserine" evidence="3">
    <location>
        <position position="39"/>
    </location>
</feature>
<feature type="modified residue" description="Omega-N-methylarginine" evidence="2">
    <location>
        <position position="53"/>
    </location>
</feature>
<feature type="modified residue" description="Phosphoserine" evidence="2">
    <location>
        <position position="65"/>
    </location>
</feature>
<feature type="modified residue" description="Phosphoserine" evidence="2">
    <location>
        <position position="77"/>
    </location>
</feature>
<feature type="modified residue" description="Phosphoserine" evidence="2">
    <location>
        <position position="101"/>
    </location>
</feature>
<feature type="modified residue" description="Phosphoserine" evidence="2">
    <location>
        <position position="113"/>
    </location>
</feature>
<feature type="modified residue" description="Phosphoserine" evidence="8">
    <location>
        <position position="121"/>
    </location>
</feature>
<feature type="modified residue" description="Phosphoserine" evidence="3">
    <location>
        <position position="139"/>
    </location>
</feature>
<feature type="modified residue" description="Phosphoserine" evidence="2">
    <location>
        <position position="193"/>
    </location>
</feature>
<feature type="modified residue" description="Phosphoserine" evidence="8">
    <location>
        <position position="207"/>
    </location>
</feature>
<feature type="modified residue" description="Phosphoserine" evidence="8">
    <location>
        <position position="209"/>
    </location>
</feature>
<feature type="modified residue" description="Phosphoserine" evidence="2">
    <location>
        <position position="212"/>
    </location>
</feature>
<feature type="modified residue" description="Phosphoserine" evidence="8">
    <location>
        <position position="298"/>
    </location>
</feature>
<feature type="modified residue" description="Phosphoserine" evidence="8">
    <location>
        <position position="318"/>
    </location>
</feature>
<feature type="modified residue" description="Phosphoserine" evidence="8">
    <location>
        <position position="347"/>
    </location>
</feature>
<feature type="modified residue" description="Phosphoserine" evidence="8">
    <location>
        <position position="350"/>
    </location>
</feature>
<dbReference type="EMBL" id="BC128744">
    <property type="protein sequence ID" value="AAI28745.1"/>
    <property type="molecule type" value="mRNA"/>
</dbReference>
<dbReference type="RefSeq" id="NP_001073168.1">
    <property type="nucleotide sequence ID" value="NM_001079700.1"/>
</dbReference>
<dbReference type="RefSeq" id="XP_017450354.1">
    <property type="nucleotide sequence ID" value="XM_017594865.3"/>
</dbReference>
<dbReference type="RefSeq" id="XP_017450355.1">
    <property type="nucleotide sequence ID" value="XM_017594866.1"/>
</dbReference>
<dbReference type="RefSeq" id="XP_017450356.1">
    <property type="nucleotide sequence ID" value="XM_017594867.3"/>
</dbReference>
<dbReference type="RefSeq" id="XP_017450357.1">
    <property type="nucleotide sequence ID" value="XM_017594868.2"/>
</dbReference>
<dbReference type="FunCoup" id="A1A5P0">
    <property type="interactions" value="91"/>
</dbReference>
<dbReference type="IntAct" id="A1A5P0">
    <property type="interactions" value="2"/>
</dbReference>
<dbReference type="STRING" id="10116.ENSRNOP00000011269"/>
<dbReference type="GlyGen" id="A1A5P0">
    <property type="glycosylation" value="2 sites"/>
</dbReference>
<dbReference type="iPTMnet" id="A1A5P0"/>
<dbReference type="PhosphoSitePlus" id="A1A5P0"/>
<dbReference type="PaxDb" id="10116-ENSRNOP00000011269"/>
<dbReference type="PeptideAtlas" id="A1A5P0"/>
<dbReference type="Ensembl" id="ENSRNOT00000011270.5">
    <property type="protein sequence ID" value="ENSRNOP00000011269.2"/>
    <property type="gene ID" value="ENSRNOG00000008517.5"/>
</dbReference>
<dbReference type="GeneID" id="315121"/>
<dbReference type="KEGG" id="rno:315121"/>
<dbReference type="AGR" id="RGD:1311131"/>
<dbReference type="CTD" id="11135"/>
<dbReference type="RGD" id="1311131">
    <property type="gene designation" value="Cdc42ep1"/>
</dbReference>
<dbReference type="eggNOG" id="ENOG502RZ2H">
    <property type="taxonomic scope" value="Eukaryota"/>
</dbReference>
<dbReference type="GeneTree" id="ENSGT00940000160068"/>
<dbReference type="HOGENOM" id="CLU_787446_0_0_1"/>
<dbReference type="InParanoid" id="A1A5P0"/>
<dbReference type="OMA" id="SWESQDE"/>
<dbReference type="OrthoDB" id="9887345at2759"/>
<dbReference type="PhylomeDB" id="A1A5P0"/>
<dbReference type="TreeFam" id="TF331725"/>
<dbReference type="Reactome" id="R-RNO-9013149">
    <property type="pathway name" value="RAC1 GTPase cycle"/>
</dbReference>
<dbReference type="Reactome" id="R-RNO-9013404">
    <property type="pathway name" value="RAC2 GTPase cycle"/>
</dbReference>
<dbReference type="Reactome" id="R-RNO-9013406">
    <property type="pathway name" value="RHOQ GTPase cycle"/>
</dbReference>
<dbReference type="Reactome" id="R-RNO-9013408">
    <property type="pathway name" value="RHOG GTPase cycle"/>
</dbReference>
<dbReference type="PRO" id="PR:A1A5P0"/>
<dbReference type="Proteomes" id="UP000002494">
    <property type="component" value="Chromosome 7"/>
</dbReference>
<dbReference type="Bgee" id="ENSRNOG00000008517">
    <property type="expression patterns" value="Expressed in stomach and 20 other cell types or tissues"/>
</dbReference>
<dbReference type="GO" id="GO:0005737">
    <property type="term" value="C:cytoplasm"/>
    <property type="evidence" value="ECO:0000266"/>
    <property type="project" value="RGD"/>
</dbReference>
<dbReference type="GO" id="GO:0005856">
    <property type="term" value="C:cytoskeleton"/>
    <property type="evidence" value="ECO:0000318"/>
    <property type="project" value="GO_Central"/>
</dbReference>
<dbReference type="GO" id="GO:0012505">
    <property type="term" value="C:endomembrane system"/>
    <property type="evidence" value="ECO:0007669"/>
    <property type="project" value="UniProtKB-SubCell"/>
</dbReference>
<dbReference type="GO" id="GO:0005886">
    <property type="term" value="C:plasma membrane"/>
    <property type="evidence" value="ECO:0000318"/>
    <property type="project" value="GO_Central"/>
</dbReference>
<dbReference type="GO" id="GO:0031267">
    <property type="term" value="F:small GTPase binding"/>
    <property type="evidence" value="ECO:0000318"/>
    <property type="project" value="GO_Central"/>
</dbReference>
<dbReference type="GO" id="GO:0030838">
    <property type="term" value="P:positive regulation of actin filament polymerization"/>
    <property type="evidence" value="ECO:0000318"/>
    <property type="project" value="GO_Central"/>
</dbReference>
<dbReference type="GO" id="GO:0031274">
    <property type="term" value="P:positive regulation of pseudopodium assembly"/>
    <property type="evidence" value="ECO:0000266"/>
    <property type="project" value="RGD"/>
</dbReference>
<dbReference type="GO" id="GO:0008360">
    <property type="term" value="P:regulation of cell shape"/>
    <property type="evidence" value="ECO:0000266"/>
    <property type="project" value="RGD"/>
</dbReference>
<dbReference type="GO" id="GO:0007266">
    <property type="term" value="P:Rho protein signal transduction"/>
    <property type="evidence" value="ECO:0000266"/>
    <property type="project" value="RGD"/>
</dbReference>
<dbReference type="InterPro" id="IPR029273">
    <property type="entry name" value="Cdc42_effect-like"/>
</dbReference>
<dbReference type="InterPro" id="IPR051296">
    <property type="entry name" value="Cdc42_Effector_BORG/CEP"/>
</dbReference>
<dbReference type="InterPro" id="IPR000095">
    <property type="entry name" value="CRIB_dom"/>
</dbReference>
<dbReference type="PANTHER" id="PTHR15344:SF7">
    <property type="entry name" value="CDC42 EFFECTOR PROTEIN 1"/>
    <property type="match status" value="1"/>
</dbReference>
<dbReference type="PANTHER" id="PTHR15344">
    <property type="entry name" value="CDC42 EFFECTOR PROTEIN BORG"/>
    <property type="match status" value="1"/>
</dbReference>
<dbReference type="Pfam" id="PF14957">
    <property type="entry name" value="BORG_CEP"/>
    <property type="match status" value="1"/>
</dbReference>
<dbReference type="Pfam" id="PF00786">
    <property type="entry name" value="PBD"/>
    <property type="match status" value="1"/>
</dbReference>
<dbReference type="SMART" id="SM00285">
    <property type="entry name" value="PBD"/>
    <property type="match status" value="1"/>
</dbReference>
<dbReference type="PROSITE" id="PS50108">
    <property type="entry name" value="CRIB"/>
    <property type="match status" value="1"/>
</dbReference>
<organism>
    <name type="scientific">Rattus norvegicus</name>
    <name type="common">Rat</name>
    <dbReference type="NCBI Taxonomy" id="10116"/>
    <lineage>
        <taxon>Eukaryota</taxon>
        <taxon>Metazoa</taxon>
        <taxon>Chordata</taxon>
        <taxon>Craniata</taxon>
        <taxon>Vertebrata</taxon>
        <taxon>Euteleostomi</taxon>
        <taxon>Mammalia</taxon>
        <taxon>Eutheria</taxon>
        <taxon>Euarchontoglires</taxon>
        <taxon>Glires</taxon>
        <taxon>Rodentia</taxon>
        <taxon>Myomorpha</taxon>
        <taxon>Muroidea</taxon>
        <taxon>Muridae</taxon>
        <taxon>Murinae</taxon>
        <taxon>Rattus</taxon>
    </lineage>
</organism>
<name>BORG5_RAT</name>
<accession>A1A5P0</accession>
<reference evidence="7" key="1">
    <citation type="journal article" date="2004" name="Genome Res.">
        <title>The status, quality, and expansion of the NIH full-length cDNA project: the Mammalian Gene Collection (MGC).</title>
        <authorList>
            <consortium name="The MGC Project Team"/>
        </authorList>
    </citation>
    <scope>NUCLEOTIDE SEQUENCE [LARGE SCALE MRNA]</scope>
    <source>
        <tissue evidence="7">Lung</tissue>
    </source>
</reference>
<reference key="2">
    <citation type="journal article" date="2012" name="Nat. Commun.">
        <title>Quantitative maps of protein phosphorylation sites across 14 different rat organs and tissues.</title>
        <authorList>
            <person name="Lundby A."/>
            <person name="Secher A."/>
            <person name="Lage K."/>
            <person name="Nordsborg N.B."/>
            <person name="Dmytriyev A."/>
            <person name="Lundby C."/>
            <person name="Olsen J.V."/>
        </authorList>
    </citation>
    <scope>PHOSPHORYLATION [LARGE SCALE ANALYSIS] AT SER-121; SER-207; SER-209; SER-298; SER-318; SER-347 AND SER-350</scope>
    <scope>IDENTIFICATION BY MASS SPECTROMETRY [LARGE SCALE ANALYSIS]</scope>
</reference>
<comment type="function">
    <text evidence="2">Probably involved in the organization of the actin cytoskeleton. Induced membrane extensions in fibroblasts (By similarity).</text>
</comment>
<comment type="subunit">
    <text evidence="2">Interacts with RHOQ and CDC42, in a GTP-dependent manner.</text>
</comment>
<comment type="subcellular location">
    <subcellularLocation>
        <location evidence="1">Endomembrane system</location>
        <topology evidence="1">Peripheral membrane protein</topology>
    </subcellularLocation>
    <subcellularLocation>
        <location evidence="1">Cytoplasm</location>
        <location evidence="1">Cytoskeleton</location>
    </subcellularLocation>
</comment>
<comment type="domain">
    <text evidence="2">The CRIB domain mediates interaction with CDC42.</text>
</comment>
<comment type="similarity">
    <text evidence="4">Belongs to the BORG/CEP family.</text>
</comment>
<protein>
    <recommendedName>
        <fullName>Cdc42 effector protein 1</fullName>
    </recommendedName>
    <alternativeName>
        <fullName>Binder of Rho GTPases 5</fullName>
    </alternativeName>
</protein>